<accession>P57344</accession>
<proteinExistence type="inferred from homology"/>
<gene>
    <name evidence="1" type="primary">acpS</name>
    <name type="ordered locus">BU256</name>
</gene>
<feature type="chain" id="PRO_0000175621" description="Holo-[acyl-carrier-protein] synthase">
    <location>
        <begin position="1"/>
        <end position="126"/>
    </location>
</feature>
<feature type="binding site" evidence="1">
    <location>
        <position position="9"/>
    </location>
    <ligand>
        <name>Mg(2+)</name>
        <dbReference type="ChEBI" id="CHEBI:18420"/>
    </ligand>
</feature>
<feature type="binding site" evidence="1">
    <location>
        <position position="58"/>
    </location>
    <ligand>
        <name>Mg(2+)</name>
        <dbReference type="ChEBI" id="CHEBI:18420"/>
    </ligand>
</feature>
<organism>
    <name type="scientific">Buchnera aphidicola subsp. Acyrthosiphon pisum (strain APS)</name>
    <name type="common">Acyrthosiphon pisum symbiotic bacterium</name>
    <dbReference type="NCBI Taxonomy" id="107806"/>
    <lineage>
        <taxon>Bacteria</taxon>
        <taxon>Pseudomonadati</taxon>
        <taxon>Pseudomonadota</taxon>
        <taxon>Gammaproteobacteria</taxon>
        <taxon>Enterobacterales</taxon>
        <taxon>Erwiniaceae</taxon>
        <taxon>Buchnera</taxon>
    </lineage>
</organism>
<sequence>MSIIGIGIDFVEILRIKNIFLKYGDKFARKILSTEEWKKYILIDDSISFLAKKFVAKEAASKALGTGINHQITFNQLEFYKNKSGKPKLRFLKHALKKSKEIQCKSIHVSISDQKLYAYALVILEN</sequence>
<protein>
    <recommendedName>
        <fullName evidence="1">Holo-[acyl-carrier-protein] synthase</fullName>
        <shortName evidence="1">Holo-ACP synthase</shortName>
        <ecNumber evidence="1">2.7.8.7</ecNumber>
    </recommendedName>
    <alternativeName>
        <fullName evidence="1">4'-phosphopantetheinyl transferase AcpS</fullName>
    </alternativeName>
</protein>
<dbReference type="EC" id="2.7.8.7" evidence="1"/>
<dbReference type="EMBL" id="BA000003">
    <property type="protein sequence ID" value="BAB12966.1"/>
    <property type="molecule type" value="Genomic_DNA"/>
</dbReference>
<dbReference type="RefSeq" id="NP_240080.1">
    <property type="nucleotide sequence ID" value="NC_002528.1"/>
</dbReference>
<dbReference type="RefSeq" id="WP_009874210.1">
    <property type="nucleotide sequence ID" value="NZ_AP036055.1"/>
</dbReference>
<dbReference type="SMR" id="P57344"/>
<dbReference type="STRING" id="563178.BUAP5A_251"/>
<dbReference type="EnsemblBacteria" id="BAB12966">
    <property type="protein sequence ID" value="BAB12966"/>
    <property type="gene ID" value="BAB12966"/>
</dbReference>
<dbReference type="KEGG" id="buc:BU256"/>
<dbReference type="PATRIC" id="fig|107806.10.peg.266"/>
<dbReference type="eggNOG" id="COG0736">
    <property type="taxonomic scope" value="Bacteria"/>
</dbReference>
<dbReference type="HOGENOM" id="CLU_089696_3_1_6"/>
<dbReference type="Proteomes" id="UP000001806">
    <property type="component" value="Chromosome"/>
</dbReference>
<dbReference type="GO" id="GO:0005737">
    <property type="term" value="C:cytoplasm"/>
    <property type="evidence" value="ECO:0007669"/>
    <property type="project" value="UniProtKB-SubCell"/>
</dbReference>
<dbReference type="GO" id="GO:0008897">
    <property type="term" value="F:holo-[acyl-carrier-protein] synthase activity"/>
    <property type="evidence" value="ECO:0007669"/>
    <property type="project" value="UniProtKB-UniRule"/>
</dbReference>
<dbReference type="GO" id="GO:0000287">
    <property type="term" value="F:magnesium ion binding"/>
    <property type="evidence" value="ECO:0007669"/>
    <property type="project" value="UniProtKB-UniRule"/>
</dbReference>
<dbReference type="GO" id="GO:0006633">
    <property type="term" value="P:fatty acid biosynthetic process"/>
    <property type="evidence" value="ECO:0007669"/>
    <property type="project" value="UniProtKB-UniRule"/>
</dbReference>
<dbReference type="FunFam" id="3.90.470.20:FF:000001">
    <property type="entry name" value="Holo-[acyl-carrier-protein] synthase"/>
    <property type="match status" value="1"/>
</dbReference>
<dbReference type="Gene3D" id="3.90.470.20">
    <property type="entry name" value="4'-phosphopantetheinyl transferase domain"/>
    <property type="match status" value="1"/>
</dbReference>
<dbReference type="HAMAP" id="MF_00101">
    <property type="entry name" value="AcpS"/>
    <property type="match status" value="1"/>
</dbReference>
<dbReference type="InterPro" id="IPR008278">
    <property type="entry name" value="4-PPantetheinyl_Trfase_dom"/>
</dbReference>
<dbReference type="InterPro" id="IPR037143">
    <property type="entry name" value="4-PPantetheinyl_Trfase_dom_sf"/>
</dbReference>
<dbReference type="InterPro" id="IPR002582">
    <property type="entry name" value="ACPS"/>
</dbReference>
<dbReference type="InterPro" id="IPR004568">
    <property type="entry name" value="Ppantetheine-prot_Trfase_dom"/>
</dbReference>
<dbReference type="NCBIfam" id="TIGR00516">
    <property type="entry name" value="acpS"/>
    <property type="match status" value="1"/>
</dbReference>
<dbReference type="NCBIfam" id="TIGR00556">
    <property type="entry name" value="pantethn_trn"/>
    <property type="match status" value="1"/>
</dbReference>
<dbReference type="Pfam" id="PF01648">
    <property type="entry name" value="ACPS"/>
    <property type="match status" value="1"/>
</dbReference>
<dbReference type="SUPFAM" id="SSF56214">
    <property type="entry name" value="4'-phosphopantetheinyl transferase"/>
    <property type="match status" value="1"/>
</dbReference>
<name>ACPS_BUCAI</name>
<evidence type="ECO:0000255" key="1">
    <source>
        <dbReference type="HAMAP-Rule" id="MF_00101"/>
    </source>
</evidence>
<reference key="1">
    <citation type="journal article" date="2000" name="Nature">
        <title>Genome sequence of the endocellular bacterial symbiont of aphids Buchnera sp. APS.</title>
        <authorList>
            <person name="Shigenobu S."/>
            <person name="Watanabe H."/>
            <person name="Hattori M."/>
            <person name="Sakaki Y."/>
            <person name="Ishikawa H."/>
        </authorList>
    </citation>
    <scope>NUCLEOTIDE SEQUENCE [LARGE SCALE GENOMIC DNA]</scope>
    <source>
        <strain>APS</strain>
    </source>
</reference>
<comment type="function">
    <text evidence="1">Transfers the 4'-phosphopantetheine moiety from coenzyme A to a Ser of acyl-carrier-protein.</text>
</comment>
<comment type="catalytic activity">
    <reaction evidence="1">
        <text>apo-[ACP] + CoA = holo-[ACP] + adenosine 3',5'-bisphosphate + H(+)</text>
        <dbReference type="Rhea" id="RHEA:12068"/>
        <dbReference type="Rhea" id="RHEA-COMP:9685"/>
        <dbReference type="Rhea" id="RHEA-COMP:9690"/>
        <dbReference type="ChEBI" id="CHEBI:15378"/>
        <dbReference type="ChEBI" id="CHEBI:29999"/>
        <dbReference type="ChEBI" id="CHEBI:57287"/>
        <dbReference type="ChEBI" id="CHEBI:58343"/>
        <dbReference type="ChEBI" id="CHEBI:64479"/>
        <dbReference type="EC" id="2.7.8.7"/>
    </reaction>
</comment>
<comment type="cofactor">
    <cofactor evidence="1">
        <name>Mg(2+)</name>
        <dbReference type="ChEBI" id="CHEBI:18420"/>
    </cofactor>
</comment>
<comment type="subcellular location">
    <subcellularLocation>
        <location evidence="1">Cytoplasm</location>
    </subcellularLocation>
</comment>
<comment type="similarity">
    <text evidence="1">Belongs to the P-Pant transferase superfamily. AcpS family.</text>
</comment>
<keyword id="KW-0963">Cytoplasm</keyword>
<keyword id="KW-0275">Fatty acid biosynthesis</keyword>
<keyword id="KW-0276">Fatty acid metabolism</keyword>
<keyword id="KW-0444">Lipid biosynthesis</keyword>
<keyword id="KW-0443">Lipid metabolism</keyword>
<keyword id="KW-0460">Magnesium</keyword>
<keyword id="KW-0479">Metal-binding</keyword>
<keyword id="KW-1185">Reference proteome</keyword>
<keyword id="KW-0808">Transferase</keyword>